<gene>
    <name evidence="1" type="primary">cutA</name>
    <name type="ordered locus">UTI89_C4734</name>
</gene>
<dbReference type="EMBL" id="CP000243">
    <property type="protein sequence ID" value="ABE10141.1"/>
    <property type="status" value="ALT_INIT"/>
    <property type="molecule type" value="Genomic_DNA"/>
</dbReference>
<dbReference type="RefSeq" id="WP_000883409.1">
    <property type="nucleotide sequence ID" value="NZ_CP064825.1"/>
</dbReference>
<dbReference type="SMR" id="Q1R3C3"/>
<dbReference type="KEGG" id="eci:UTI89_C4734"/>
<dbReference type="HOGENOM" id="CLU_098807_3_0_6"/>
<dbReference type="Proteomes" id="UP000001952">
    <property type="component" value="Chromosome"/>
</dbReference>
<dbReference type="GO" id="GO:0005737">
    <property type="term" value="C:cytoplasm"/>
    <property type="evidence" value="ECO:0007669"/>
    <property type="project" value="UniProtKB-SubCell"/>
</dbReference>
<dbReference type="GO" id="GO:0005507">
    <property type="term" value="F:copper ion binding"/>
    <property type="evidence" value="ECO:0007669"/>
    <property type="project" value="UniProtKB-UniRule"/>
</dbReference>
<dbReference type="GO" id="GO:0010038">
    <property type="term" value="P:response to metal ion"/>
    <property type="evidence" value="ECO:0007669"/>
    <property type="project" value="InterPro"/>
</dbReference>
<dbReference type="FunFam" id="3.30.70.120:FF:000004">
    <property type="entry name" value="Divalent-cation tolerance protein CutA"/>
    <property type="match status" value="1"/>
</dbReference>
<dbReference type="Gene3D" id="3.30.70.120">
    <property type="match status" value="1"/>
</dbReference>
<dbReference type="HAMAP" id="MF_01160">
    <property type="entry name" value="CutA"/>
    <property type="match status" value="1"/>
</dbReference>
<dbReference type="InterPro" id="IPR023700">
    <property type="entry name" value="CutA_Enterobact"/>
</dbReference>
<dbReference type="InterPro" id="IPR004323">
    <property type="entry name" value="Ion_tolerance_CutA"/>
</dbReference>
<dbReference type="InterPro" id="IPR011322">
    <property type="entry name" value="N-reg_PII-like_a/b"/>
</dbReference>
<dbReference type="InterPro" id="IPR015867">
    <property type="entry name" value="N-reg_PII/ATP_PRibTrfase_C"/>
</dbReference>
<dbReference type="NCBIfam" id="NF007930">
    <property type="entry name" value="PRK10645.1"/>
    <property type="match status" value="1"/>
</dbReference>
<dbReference type="PANTHER" id="PTHR23419">
    <property type="entry name" value="DIVALENT CATION TOLERANCE CUTA-RELATED"/>
    <property type="match status" value="1"/>
</dbReference>
<dbReference type="PANTHER" id="PTHR23419:SF8">
    <property type="entry name" value="FI09726P"/>
    <property type="match status" value="1"/>
</dbReference>
<dbReference type="Pfam" id="PF03091">
    <property type="entry name" value="CutA1"/>
    <property type="match status" value="1"/>
</dbReference>
<dbReference type="SUPFAM" id="SSF54913">
    <property type="entry name" value="GlnB-like"/>
    <property type="match status" value="1"/>
</dbReference>
<keyword id="KW-0186">Copper</keyword>
<keyword id="KW-0963">Cytoplasm</keyword>
<keyword id="KW-0479">Metal-binding</keyword>
<comment type="function">
    <text evidence="1">Involved in resistance toward heavy metals.</text>
</comment>
<comment type="cofactor">
    <cofactor evidence="1">
        <name>Cu cation</name>
        <dbReference type="ChEBI" id="CHEBI:23378"/>
    </cofactor>
    <text evidence="1">Binds 1 copper ion per subunit.</text>
</comment>
<comment type="subunit">
    <text evidence="1">Homotrimer.</text>
</comment>
<comment type="subcellular location">
    <subcellularLocation>
        <location evidence="1">Cytoplasm</location>
    </subcellularLocation>
</comment>
<comment type="similarity">
    <text evidence="1">Belongs to the CutA family.</text>
</comment>
<comment type="sequence caution" evidence="2">
    <conflict type="erroneous initiation">
        <sequence resource="EMBL-CDS" id="ABE10141"/>
    </conflict>
</comment>
<evidence type="ECO:0000255" key="1">
    <source>
        <dbReference type="HAMAP-Rule" id="MF_01160"/>
    </source>
</evidence>
<evidence type="ECO:0000305" key="2"/>
<protein>
    <recommendedName>
        <fullName evidence="1">Divalent-cation tolerance protein CutA</fullName>
    </recommendedName>
</protein>
<feature type="chain" id="PRO_0000280483" description="Divalent-cation tolerance protein CutA">
    <location>
        <begin position="1"/>
        <end position="112"/>
    </location>
</feature>
<feature type="binding site" evidence="1">
    <location>
        <position position="16"/>
    </location>
    <ligand>
        <name>Cu cation</name>
        <dbReference type="ChEBI" id="CHEBI:23378"/>
    </ligand>
</feature>
<feature type="binding site" evidence="1">
    <location>
        <position position="83"/>
    </location>
    <ligand>
        <name>Cu cation</name>
        <dbReference type="ChEBI" id="CHEBI:23378"/>
    </ligand>
</feature>
<feature type="binding site" evidence="1">
    <location>
        <position position="84"/>
    </location>
    <ligand>
        <name>Cu cation</name>
        <dbReference type="ChEBI" id="CHEBI:23378"/>
    </ligand>
</feature>
<proteinExistence type="inferred from homology"/>
<accession>Q1R3C3</accession>
<sequence length="112" mass="12361">MLDEKSSNTTSVVVLCTAPDEATAQDLAAKVLAEKLAACATLIPGATSLYYWEGKLEQEYEVQMILKTTVSHQQALLECLKSHHPYQTPELLVLPVTHGDTDYLSWLNASLR</sequence>
<reference key="1">
    <citation type="journal article" date="2006" name="Proc. Natl. Acad. Sci. U.S.A.">
        <title>Identification of genes subject to positive selection in uropathogenic strains of Escherichia coli: a comparative genomics approach.</title>
        <authorList>
            <person name="Chen S.L."/>
            <person name="Hung C.-S."/>
            <person name="Xu J."/>
            <person name="Reigstad C.S."/>
            <person name="Magrini V."/>
            <person name="Sabo A."/>
            <person name="Blasiar D."/>
            <person name="Bieri T."/>
            <person name="Meyer R.R."/>
            <person name="Ozersky P."/>
            <person name="Armstrong J.R."/>
            <person name="Fulton R.S."/>
            <person name="Latreille J.P."/>
            <person name="Spieth J."/>
            <person name="Hooton T.M."/>
            <person name="Mardis E.R."/>
            <person name="Hultgren S.J."/>
            <person name="Gordon J.I."/>
        </authorList>
    </citation>
    <scope>NUCLEOTIDE SEQUENCE [LARGE SCALE GENOMIC DNA]</scope>
    <source>
        <strain>UTI89 / UPEC</strain>
    </source>
</reference>
<organism>
    <name type="scientific">Escherichia coli (strain UTI89 / UPEC)</name>
    <dbReference type="NCBI Taxonomy" id="364106"/>
    <lineage>
        <taxon>Bacteria</taxon>
        <taxon>Pseudomonadati</taxon>
        <taxon>Pseudomonadota</taxon>
        <taxon>Gammaproteobacteria</taxon>
        <taxon>Enterobacterales</taxon>
        <taxon>Enterobacteriaceae</taxon>
        <taxon>Escherichia</taxon>
    </lineage>
</organism>
<name>CUTA_ECOUT</name>